<proteinExistence type="inferred from homology"/>
<gene>
    <name evidence="1" type="primary">trhO</name>
    <name type="ordered locus">XfasM23_2090</name>
</gene>
<name>TRHO_XYLF2</name>
<dbReference type="EC" id="1.14.-.-" evidence="1"/>
<dbReference type="EMBL" id="CP001011">
    <property type="protein sequence ID" value="ACB93488.1"/>
    <property type="molecule type" value="Genomic_DNA"/>
</dbReference>
<dbReference type="RefSeq" id="WP_004087545.1">
    <property type="nucleotide sequence ID" value="NC_010577.1"/>
</dbReference>
<dbReference type="SMR" id="B2I9X1"/>
<dbReference type="KEGG" id="xfn:XfasM23_2090"/>
<dbReference type="HOGENOM" id="CLU_038878_0_1_6"/>
<dbReference type="Proteomes" id="UP000001698">
    <property type="component" value="Chromosome"/>
</dbReference>
<dbReference type="GO" id="GO:0016705">
    <property type="term" value="F:oxidoreductase activity, acting on paired donors, with incorporation or reduction of molecular oxygen"/>
    <property type="evidence" value="ECO:0007669"/>
    <property type="project" value="UniProtKB-UniRule"/>
</dbReference>
<dbReference type="GO" id="GO:0006400">
    <property type="term" value="P:tRNA modification"/>
    <property type="evidence" value="ECO:0007669"/>
    <property type="project" value="UniProtKB-UniRule"/>
</dbReference>
<dbReference type="Gene3D" id="3.30.70.100">
    <property type="match status" value="1"/>
</dbReference>
<dbReference type="Gene3D" id="3.40.250.10">
    <property type="entry name" value="Rhodanese-like domain"/>
    <property type="match status" value="1"/>
</dbReference>
<dbReference type="HAMAP" id="MF_00469">
    <property type="entry name" value="TrhO"/>
    <property type="match status" value="1"/>
</dbReference>
<dbReference type="InterPro" id="IPR001763">
    <property type="entry name" value="Rhodanese-like_dom"/>
</dbReference>
<dbReference type="InterPro" id="IPR036873">
    <property type="entry name" value="Rhodanese-like_dom_sf"/>
</dbReference>
<dbReference type="InterPro" id="IPR020936">
    <property type="entry name" value="TrhO"/>
</dbReference>
<dbReference type="InterPro" id="IPR040503">
    <property type="entry name" value="TRHO_N"/>
</dbReference>
<dbReference type="NCBIfam" id="NF003703">
    <property type="entry name" value="PRK05320.1"/>
    <property type="match status" value="1"/>
</dbReference>
<dbReference type="PANTHER" id="PTHR43268:SF3">
    <property type="entry name" value="RHODANESE-LIKE DOMAIN-CONTAINING PROTEIN 7-RELATED"/>
    <property type="match status" value="1"/>
</dbReference>
<dbReference type="PANTHER" id="PTHR43268">
    <property type="entry name" value="THIOSULFATE SULFURTRANSFERASE/RHODANESE-LIKE DOMAIN-CONTAINING PROTEIN 2"/>
    <property type="match status" value="1"/>
</dbReference>
<dbReference type="Pfam" id="PF00581">
    <property type="entry name" value="Rhodanese"/>
    <property type="match status" value="1"/>
</dbReference>
<dbReference type="Pfam" id="PF17773">
    <property type="entry name" value="UPF0176_N"/>
    <property type="match status" value="1"/>
</dbReference>
<dbReference type="SMART" id="SM00450">
    <property type="entry name" value="RHOD"/>
    <property type="match status" value="1"/>
</dbReference>
<dbReference type="SUPFAM" id="SSF52821">
    <property type="entry name" value="Rhodanese/Cell cycle control phosphatase"/>
    <property type="match status" value="1"/>
</dbReference>
<dbReference type="PROSITE" id="PS50206">
    <property type="entry name" value="RHODANESE_3"/>
    <property type="match status" value="1"/>
</dbReference>
<reference key="1">
    <citation type="journal article" date="2010" name="J. Bacteriol.">
        <title>Whole genome sequences of two Xylella fastidiosa strains (M12 and M23) causing almond leaf scorch disease in California.</title>
        <authorList>
            <person name="Chen J."/>
            <person name="Xie G."/>
            <person name="Han S."/>
            <person name="Chertkov O."/>
            <person name="Sims D."/>
            <person name="Civerolo E.L."/>
        </authorList>
    </citation>
    <scope>NUCLEOTIDE SEQUENCE [LARGE SCALE GENOMIC DNA]</scope>
    <source>
        <strain>M23</strain>
    </source>
</reference>
<feature type="chain" id="PRO_1000200389" description="tRNA uridine(34) hydroxylase">
    <location>
        <begin position="1"/>
        <end position="257"/>
    </location>
</feature>
<feature type="domain" description="Rhodanese" evidence="1">
    <location>
        <begin position="128"/>
        <end position="222"/>
    </location>
</feature>
<feature type="active site" description="Cysteine persulfide intermediate" evidence="1">
    <location>
        <position position="182"/>
    </location>
</feature>
<comment type="function">
    <text evidence="1">Catalyzes oxygen-dependent 5-hydroxyuridine (ho5U) modification at position 34 in tRNAs.</text>
</comment>
<comment type="catalytic activity">
    <reaction evidence="1">
        <text>uridine(34) in tRNA + AH2 + O2 = 5-hydroxyuridine(34) in tRNA + A + H2O</text>
        <dbReference type="Rhea" id="RHEA:64224"/>
        <dbReference type="Rhea" id="RHEA-COMP:11727"/>
        <dbReference type="Rhea" id="RHEA-COMP:13381"/>
        <dbReference type="ChEBI" id="CHEBI:13193"/>
        <dbReference type="ChEBI" id="CHEBI:15377"/>
        <dbReference type="ChEBI" id="CHEBI:15379"/>
        <dbReference type="ChEBI" id="CHEBI:17499"/>
        <dbReference type="ChEBI" id="CHEBI:65315"/>
        <dbReference type="ChEBI" id="CHEBI:136877"/>
    </reaction>
</comment>
<comment type="similarity">
    <text evidence="1">Belongs to the TrhO family.</text>
</comment>
<accession>B2I9X1</accession>
<keyword id="KW-0560">Oxidoreductase</keyword>
<keyword id="KW-0819">tRNA processing</keyword>
<evidence type="ECO:0000255" key="1">
    <source>
        <dbReference type="HAMAP-Rule" id="MF_00469"/>
    </source>
</evidence>
<protein>
    <recommendedName>
        <fullName evidence="1">tRNA uridine(34) hydroxylase</fullName>
        <ecNumber evidence="1">1.14.-.-</ecNumber>
    </recommendedName>
    <alternativeName>
        <fullName evidence="1">tRNA hydroxylation protein O</fullName>
    </alternativeName>
</protein>
<organism>
    <name type="scientific">Xylella fastidiosa (strain M23)</name>
    <dbReference type="NCBI Taxonomy" id="405441"/>
    <lineage>
        <taxon>Bacteria</taxon>
        <taxon>Pseudomonadati</taxon>
        <taxon>Pseudomonadota</taxon>
        <taxon>Gammaproteobacteria</taxon>
        <taxon>Lysobacterales</taxon>
        <taxon>Lysobacteraceae</taxon>
        <taxon>Xylella</taxon>
    </lineage>
</organism>
<sequence length="257" mass="28503">MVIINTAAYHFVSITQPQTLADQIRAHGEIAGLKGTVLIANEGINLFLAGEKEAINAFYAWLCADVRFAALHVKYSVSAYKPFARFKVKVRPEIISFRRGDISPLQVRAPGVSAHTLRDWLRRGCDDNGRRLVMLDARNQQEIAYGTFSGAMTLPITKFTGFPGALAHYRDLLSDATVVSFCTGGIRCEKAVLWMRADGMDNVLQLEGGILGYFEQVGGEGYDGRCFVFDKRVALDPQLRPLYDMRVVASFARSEIS</sequence>